<gene>
    <name evidence="1" type="primary">pth</name>
    <name type="ordered locus">Mfl077</name>
</gene>
<keyword id="KW-0963">Cytoplasm</keyword>
<keyword id="KW-0378">Hydrolase</keyword>
<keyword id="KW-1185">Reference proteome</keyword>
<keyword id="KW-0694">RNA-binding</keyword>
<keyword id="KW-0820">tRNA-binding</keyword>
<organism>
    <name type="scientific">Mesoplasma florum (strain ATCC 33453 / NBRC 100688 / NCTC 11704 / L1)</name>
    <name type="common">Acholeplasma florum</name>
    <dbReference type="NCBI Taxonomy" id="265311"/>
    <lineage>
        <taxon>Bacteria</taxon>
        <taxon>Bacillati</taxon>
        <taxon>Mycoplasmatota</taxon>
        <taxon>Mollicutes</taxon>
        <taxon>Entomoplasmatales</taxon>
        <taxon>Entomoplasmataceae</taxon>
        <taxon>Mesoplasma</taxon>
    </lineage>
</organism>
<accession>Q6F240</accession>
<name>PTH_MESFL</name>
<feature type="chain" id="PRO_0000187767" description="Peptidyl-tRNA hydrolase">
    <location>
        <begin position="1"/>
        <end position="186"/>
    </location>
</feature>
<feature type="active site" description="Proton acceptor" evidence="1">
    <location>
        <position position="19"/>
    </location>
</feature>
<feature type="binding site" evidence="1">
    <location>
        <position position="14"/>
    </location>
    <ligand>
        <name>tRNA</name>
        <dbReference type="ChEBI" id="CHEBI:17843"/>
    </ligand>
</feature>
<feature type="binding site" evidence="1">
    <location>
        <position position="64"/>
    </location>
    <ligand>
        <name>tRNA</name>
        <dbReference type="ChEBI" id="CHEBI:17843"/>
    </ligand>
</feature>
<feature type="binding site" evidence="1">
    <location>
        <position position="66"/>
    </location>
    <ligand>
        <name>tRNA</name>
        <dbReference type="ChEBI" id="CHEBI:17843"/>
    </ligand>
</feature>
<feature type="binding site" evidence="1">
    <location>
        <position position="112"/>
    </location>
    <ligand>
        <name>tRNA</name>
        <dbReference type="ChEBI" id="CHEBI:17843"/>
    </ligand>
</feature>
<feature type="site" description="Discriminates between blocked and unblocked aminoacyl-tRNA" evidence="1">
    <location>
        <position position="9"/>
    </location>
</feature>
<feature type="site" description="Stabilizes the basic form of H active site to accept a proton" evidence="1">
    <location>
        <position position="91"/>
    </location>
</feature>
<reference key="1">
    <citation type="submission" date="2004-06" db="EMBL/GenBank/DDBJ databases">
        <authorList>
            <person name="Birren B.W."/>
            <person name="Stange-Thomann N."/>
            <person name="Hafez N."/>
            <person name="DeCaprio D."/>
            <person name="Fisher S."/>
            <person name="Butler J."/>
            <person name="Elkins T."/>
            <person name="Kodira C.D."/>
            <person name="Major J."/>
            <person name="Wang S."/>
            <person name="Nicol R."/>
            <person name="Nusbaum C."/>
        </authorList>
    </citation>
    <scope>NUCLEOTIDE SEQUENCE [LARGE SCALE GENOMIC DNA]</scope>
    <source>
        <strain>ATCC 33453 / NBRC 100688 / NCTC 11704 / L1</strain>
    </source>
</reference>
<sequence>MKLIVGLGNYGSQYEATRHNAGWIALDQLIEKYGFTQQKNEHNSIIFFSTVNNEKVLFVKPQTYMNNSGIAIQAIMHYYKIEIKDLVILHDEKDFPVGKNQFKMNGSAAGHNGIKSVIQYLGTQNFNRYRIGIGQPEQGWKIIDWVLSKFKPEELENIILASKSISNFVNDWTKGTTFQNIMNLYN</sequence>
<protein>
    <recommendedName>
        <fullName evidence="1">Peptidyl-tRNA hydrolase</fullName>
        <shortName evidence="1">Pth</shortName>
        <ecNumber evidence="1">3.1.1.29</ecNumber>
    </recommendedName>
</protein>
<proteinExistence type="inferred from homology"/>
<dbReference type="EC" id="3.1.1.29" evidence="1"/>
<dbReference type="EMBL" id="AE017263">
    <property type="protein sequence ID" value="AAT75433.1"/>
    <property type="molecule type" value="Genomic_DNA"/>
</dbReference>
<dbReference type="RefSeq" id="WP_011182974.1">
    <property type="nucleotide sequence ID" value="NC_006055.1"/>
</dbReference>
<dbReference type="RefSeq" id="YP_053317.1">
    <property type="nucleotide sequence ID" value="NC_006055.1"/>
</dbReference>
<dbReference type="SMR" id="Q6F240"/>
<dbReference type="STRING" id="265311.Mfl077"/>
<dbReference type="PaxDb" id="265311-Mfl077"/>
<dbReference type="EnsemblBacteria" id="AAT75433">
    <property type="protein sequence ID" value="AAT75433"/>
    <property type="gene ID" value="Mfl077"/>
</dbReference>
<dbReference type="GeneID" id="2898055"/>
<dbReference type="KEGG" id="mfl:Mfl077"/>
<dbReference type="PATRIC" id="fig|265311.5.peg.77"/>
<dbReference type="eggNOG" id="COG0193">
    <property type="taxonomic scope" value="Bacteria"/>
</dbReference>
<dbReference type="HOGENOM" id="CLU_062456_4_1_14"/>
<dbReference type="OrthoDB" id="9800507at2"/>
<dbReference type="Proteomes" id="UP000006647">
    <property type="component" value="Chromosome"/>
</dbReference>
<dbReference type="GO" id="GO:0005737">
    <property type="term" value="C:cytoplasm"/>
    <property type="evidence" value="ECO:0007669"/>
    <property type="project" value="UniProtKB-SubCell"/>
</dbReference>
<dbReference type="GO" id="GO:0004045">
    <property type="term" value="F:peptidyl-tRNA hydrolase activity"/>
    <property type="evidence" value="ECO:0007669"/>
    <property type="project" value="UniProtKB-UniRule"/>
</dbReference>
<dbReference type="GO" id="GO:0000049">
    <property type="term" value="F:tRNA binding"/>
    <property type="evidence" value="ECO:0007669"/>
    <property type="project" value="UniProtKB-UniRule"/>
</dbReference>
<dbReference type="GO" id="GO:0006515">
    <property type="term" value="P:protein quality control for misfolded or incompletely synthesized proteins"/>
    <property type="evidence" value="ECO:0007669"/>
    <property type="project" value="UniProtKB-UniRule"/>
</dbReference>
<dbReference type="GO" id="GO:0072344">
    <property type="term" value="P:rescue of stalled ribosome"/>
    <property type="evidence" value="ECO:0007669"/>
    <property type="project" value="UniProtKB-UniRule"/>
</dbReference>
<dbReference type="CDD" id="cd00462">
    <property type="entry name" value="PTH"/>
    <property type="match status" value="1"/>
</dbReference>
<dbReference type="FunFam" id="3.40.50.1470:FF:000001">
    <property type="entry name" value="Peptidyl-tRNA hydrolase"/>
    <property type="match status" value="1"/>
</dbReference>
<dbReference type="Gene3D" id="3.40.50.1470">
    <property type="entry name" value="Peptidyl-tRNA hydrolase"/>
    <property type="match status" value="1"/>
</dbReference>
<dbReference type="HAMAP" id="MF_00083">
    <property type="entry name" value="Pept_tRNA_hydro_bact"/>
    <property type="match status" value="1"/>
</dbReference>
<dbReference type="InterPro" id="IPR001328">
    <property type="entry name" value="Pept_tRNA_hydro"/>
</dbReference>
<dbReference type="InterPro" id="IPR018171">
    <property type="entry name" value="Pept_tRNA_hydro_CS"/>
</dbReference>
<dbReference type="InterPro" id="IPR036416">
    <property type="entry name" value="Pept_tRNA_hydro_sf"/>
</dbReference>
<dbReference type="NCBIfam" id="TIGR00447">
    <property type="entry name" value="pth"/>
    <property type="match status" value="1"/>
</dbReference>
<dbReference type="PANTHER" id="PTHR17224">
    <property type="entry name" value="PEPTIDYL-TRNA HYDROLASE"/>
    <property type="match status" value="1"/>
</dbReference>
<dbReference type="PANTHER" id="PTHR17224:SF1">
    <property type="entry name" value="PEPTIDYL-TRNA HYDROLASE"/>
    <property type="match status" value="1"/>
</dbReference>
<dbReference type="Pfam" id="PF01195">
    <property type="entry name" value="Pept_tRNA_hydro"/>
    <property type="match status" value="1"/>
</dbReference>
<dbReference type="SUPFAM" id="SSF53178">
    <property type="entry name" value="Peptidyl-tRNA hydrolase-like"/>
    <property type="match status" value="1"/>
</dbReference>
<dbReference type="PROSITE" id="PS01195">
    <property type="entry name" value="PEPT_TRNA_HYDROL_1"/>
    <property type="match status" value="1"/>
</dbReference>
<dbReference type="PROSITE" id="PS01196">
    <property type="entry name" value="PEPT_TRNA_HYDROL_2"/>
    <property type="match status" value="1"/>
</dbReference>
<evidence type="ECO:0000255" key="1">
    <source>
        <dbReference type="HAMAP-Rule" id="MF_00083"/>
    </source>
</evidence>
<comment type="function">
    <text evidence="1">Hydrolyzes ribosome-free peptidyl-tRNAs (with 1 or more amino acids incorporated), which drop off the ribosome during protein synthesis, or as a result of ribosome stalling.</text>
</comment>
<comment type="function">
    <text evidence="1">Catalyzes the release of premature peptidyl moieties from peptidyl-tRNA molecules trapped in stalled 50S ribosomal subunits, and thus maintains levels of free tRNAs and 50S ribosomes.</text>
</comment>
<comment type="catalytic activity">
    <reaction evidence="1">
        <text>an N-acyl-L-alpha-aminoacyl-tRNA + H2O = an N-acyl-L-amino acid + a tRNA + H(+)</text>
        <dbReference type="Rhea" id="RHEA:54448"/>
        <dbReference type="Rhea" id="RHEA-COMP:10123"/>
        <dbReference type="Rhea" id="RHEA-COMP:13883"/>
        <dbReference type="ChEBI" id="CHEBI:15377"/>
        <dbReference type="ChEBI" id="CHEBI:15378"/>
        <dbReference type="ChEBI" id="CHEBI:59874"/>
        <dbReference type="ChEBI" id="CHEBI:78442"/>
        <dbReference type="ChEBI" id="CHEBI:138191"/>
        <dbReference type="EC" id="3.1.1.29"/>
    </reaction>
</comment>
<comment type="subunit">
    <text evidence="1">Monomer.</text>
</comment>
<comment type="subcellular location">
    <subcellularLocation>
        <location evidence="1">Cytoplasm</location>
    </subcellularLocation>
</comment>
<comment type="similarity">
    <text evidence="1">Belongs to the PTH family.</text>
</comment>